<accession>P80872</accession>
<dbReference type="EMBL" id="AF027868">
    <property type="protein sequence ID" value="AAB84477.1"/>
    <property type="status" value="ALT_INIT"/>
    <property type="molecule type" value="Genomic_DNA"/>
</dbReference>
<dbReference type="EMBL" id="AL009126">
    <property type="protein sequence ID" value="CAB13816.2"/>
    <property type="molecule type" value="Genomic_DNA"/>
</dbReference>
<dbReference type="PIR" id="H69901">
    <property type="entry name" value="H69901"/>
</dbReference>
<dbReference type="RefSeq" id="NP_389805.2">
    <property type="nucleotide sequence ID" value="NC_000964.3"/>
</dbReference>
<dbReference type="RefSeq" id="WP_003231259.1">
    <property type="nucleotide sequence ID" value="NZ_OZ025638.1"/>
</dbReference>
<dbReference type="SMR" id="P80872"/>
<dbReference type="FunCoup" id="P80872">
    <property type="interactions" value="139"/>
</dbReference>
<dbReference type="STRING" id="224308.BSU19240"/>
<dbReference type="PaxDb" id="224308-BSU19240"/>
<dbReference type="EnsemblBacteria" id="CAB13816">
    <property type="protein sequence ID" value="CAB13816"/>
    <property type="gene ID" value="BSU_19240"/>
</dbReference>
<dbReference type="GeneID" id="939676"/>
<dbReference type="KEGG" id="bsu:BSU19240"/>
<dbReference type="PATRIC" id="fig|224308.179.peg.2104"/>
<dbReference type="eggNOG" id="COG1734">
    <property type="taxonomic scope" value="Bacteria"/>
</dbReference>
<dbReference type="InParanoid" id="P80872"/>
<dbReference type="OrthoDB" id="9811543at2"/>
<dbReference type="PhylomeDB" id="P80872"/>
<dbReference type="BioCyc" id="BSUB:BSU19240-MONOMER"/>
<dbReference type="Proteomes" id="UP000001570">
    <property type="component" value="Chromosome"/>
</dbReference>
<dbReference type="GO" id="GO:0008270">
    <property type="term" value="F:zinc ion binding"/>
    <property type="evidence" value="ECO:0007669"/>
    <property type="project" value="UniProtKB-KW"/>
</dbReference>
<dbReference type="Gene3D" id="1.20.120.910">
    <property type="entry name" value="DksA, coiled-coil domain"/>
    <property type="match status" value="1"/>
</dbReference>
<dbReference type="InterPro" id="IPR037187">
    <property type="entry name" value="DnaK_N"/>
</dbReference>
<dbReference type="InterPro" id="IPR000962">
    <property type="entry name" value="Znf_DskA_TraR"/>
</dbReference>
<dbReference type="InterPro" id="IPR020458">
    <property type="entry name" value="Znf_DskA_TraR_CS"/>
</dbReference>
<dbReference type="PANTHER" id="PTHR33823:SF4">
    <property type="entry name" value="GENERAL STRESS PROTEIN 16O"/>
    <property type="match status" value="1"/>
</dbReference>
<dbReference type="PANTHER" id="PTHR33823">
    <property type="entry name" value="RNA POLYMERASE-BINDING TRANSCRIPTION FACTOR DKSA-RELATED"/>
    <property type="match status" value="1"/>
</dbReference>
<dbReference type="Pfam" id="PF01258">
    <property type="entry name" value="zf-dskA_traR"/>
    <property type="match status" value="1"/>
</dbReference>
<dbReference type="SUPFAM" id="SSF109635">
    <property type="entry name" value="DnaK suppressor protein DksA, alpha-hairpin domain"/>
    <property type="match status" value="1"/>
</dbReference>
<dbReference type="SUPFAM" id="SSF57716">
    <property type="entry name" value="Glucocorticoid receptor-like (DNA-binding domain)"/>
    <property type="match status" value="1"/>
</dbReference>
<dbReference type="PROSITE" id="PS01102">
    <property type="entry name" value="ZF_DKSA_1"/>
    <property type="match status" value="1"/>
</dbReference>
<dbReference type="PROSITE" id="PS51128">
    <property type="entry name" value="ZF_DKSA_2"/>
    <property type="match status" value="1"/>
</dbReference>
<gene>
    <name type="primary">yocK</name>
    <name type="ordered locus">BSU19240</name>
</gene>
<protein>
    <recommendedName>
        <fullName>General stress protein 16O</fullName>
        <shortName>GSP16O</shortName>
    </recommendedName>
</protein>
<comment type="induction">
    <text>By heat shock, salt stress, oxidative stress, glucose limitation and oxygen limitation.</text>
</comment>
<comment type="sequence caution" evidence="4">
    <conflict type="erroneous initiation">
        <sequence resource="EMBL-CDS" id="AAB84477"/>
    </conflict>
</comment>
<evidence type="ECO:0000255" key="1">
    <source>
        <dbReference type="PROSITE-ProRule" id="PRU00510"/>
    </source>
</evidence>
<evidence type="ECO:0000256" key="2">
    <source>
        <dbReference type="SAM" id="MobiDB-lite"/>
    </source>
</evidence>
<evidence type="ECO:0000269" key="3">
    <source>
    </source>
</evidence>
<evidence type="ECO:0000305" key="4"/>
<keyword id="KW-0903">Direct protein sequencing</keyword>
<keyword id="KW-0479">Metal-binding</keyword>
<keyword id="KW-1185">Reference proteome</keyword>
<keyword id="KW-0346">Stress response</keyword>
<keyword id="KW-0862">Zinc</keyword>
<keyword id="KW-0863">Zinc-finger</keyword>
<reference key="1">
    <citation type="submission" date="1997-11" db="EMBL/GenBank/DDBJ databases">
        <title>Sequence analysis of the Bacillus subtilis chromosome region between the terC and odhAB loci cloned in a yeast artificial chromosome.</title>
        <authorList>
            <person name="Lapidus A."/>
            <person name="Galleron N."/>
            <person name="Sorokin A."/>
            <person name="Ehrlich S.D."/>
        </authorList>
    </citation>
    <scope>NUCLEOTIDE SEQUENCE [GENOMIC DNA]</scope>
</reference>
<reference key="2">
    <citation type="journal article" date="1997" name="Nature">
        <title>The complete genome sequence of the Gram-positive bacterium Bacillus subtilis.</title>
        <authorList>
            <person name="Kunst F."/>
            <person name="Ogasawara N."/>
            <person name="Moszer I."/>
            <person name="Albertini A.M."/>
            <person name="Alloni G."/>
            <person name="Azevedo V."/>
            <person name="Bertero M.G."/>
            <person name="Bessieres P."/>
            <person name="Bolotin A."/>
            <person name="Borchert S."/>
            <person name="Borriss R."/>
            <person name="Boursier L."/>
            <person name="Brans A."/>
            <person name="Braun M."/>
            <person name="Brignell S.C."/>
            <person name="Bron S."/>
            <person name="Brouillet S."/>
            <person name="Bruschi C.V."/>
            <person name="Caldwell B."/>
            <person name="Capuano V."/>
            <person name="Carter N.M."/>
            <person name="Choi S.-K."/>
            <person name="Codani J.-J."/>
            <person name="Connerton I.F."/>
            <person name="Cummings N.J."/>
            <person name="Daniel R.A."/>
            <person name="Denizot F."/>
            <person name="Devine K.M."/>
            <person name="Duesterhoeft A."/>
            <person name="Ehrlich S.D."/>
            <person name="Emmerson P.T."/>
            <person name="Entian K.-D."/>
            <person name="Errington J."/>
            <person name="Fabret C."/>
            <person name="Ferrari E."/>
            <person name="Foulger D."/>
            <person name="Fritz C."/>
            <person name="Fujita M."/>
            <person name="Fujita Y."/>
            <person name="Fuma S."/>
            <person name="Galizzi A."/>
            <person name="Galleron N."/>
            <person name="Ghim S.-Y."/>
            <person name="Glaser P."/>
            <person name="Goffeau A."/>
            <person name="Golightly E.J."/>
            <person name="Grandi G."/>
            <person name="Guiseppi G."/>
            <person name="Guy B.J."/>
            <person name="Haga K."/>
            <person name="Haiech J."/>
            <person name="Harwood C.R."/>
            <person name="Henaut A."/>
            <person name="Hilbert H."/>
            <person name="Holsappel S."/>
            <person name="Hosono S."/>
            <person name="Hullo M.-F."/>
            <person name="Itaya M."/>
            <person name="Jones L.-M."/>
            <person name="Joris B."/>
            <person name="Karamata D."/>
            <person name="Kasahara Y."/>
            <person name="Klaerr-Blanchard M."/>
            <person name="Klein C."/>
            <person name="Kobayashi Y."/>
            <person name="Koetter P."/>
            <person name="Koningstein G."/>
            <person name="Krogh S."/>
            <person name="Kumano M."/>
            <person name="Kurita K."/>
            <person name="Lapidus A."/>
            <person name="Lardinois S."/>
            <person name="Lauber J."/>
            <person name="Lazarevic V."/>
            <person name="Lee S.-M."/>
            <person name="Levine A."/>
            <person name="Liu H."/>
            <person name="Masuda S."/>
            <person name="Mauel C."/>
            <person name="Medigue C."/>
            <person name="Medina N."/>
            <person name="Mellado R.P."/>
            <person name="Mizuno M."/>
            <person name="Moestl D."/>
            <person name="Nakai S."/>
            <person name="Noback M."/>
            <person name="Noone D."/>
            <person name="O'Reilly M."/>
            <person name="Ogawa K."/>
            <person name="Ogiwara A."/>
            <person name="Oudega B."/>
            <person name="Park S.-H."/>
            <person name="Parro V."/>
            <person name="Pohl T.M."/>
            <person name="Portetelle D."/>
            <person name="Porwollik S."/>
            <person name="Prescott A.M."/>
            <person name="Presecan E."/>
            <person name="Pujic P."/>
            <person name="Purnelle B."/>
            <person name="Rapoport G."/>
            <person name="Rey M."/>
            <person name="Reynolds S."/>
            <person name="Rieger M."/>
            <person name="Rivolta C."/>
            <person name="Rocha E."/>
            <person name="Roche B."/>
            <person name="Rose M."/>
            <person name="Sadaie Y."/>
            <person name="Sato T."/>
            <person name="Scanlan E."/>
            <person name="Schleich S."/>
            <person name="Schroeter R."/>
            <person name="Scoffone F."/>
            <person name="Sekiguchi J."/>
            <person name="Sekowska A."/>
            <person name="Seror S.J."/>
            <person name="Serror P."/>
            <person name="Shin B.-S."/>
            <person name="Soldo B."/>
            <person name="Sorokin A."/>
            <person name="Tacconi E."/>
            <person name="Takagi T."/>
            <person name="Takahashi H."/>
            <person name="Takemaru K."/>
            <person name="Takeuchi M."/>
            <person name="Tamakoshi A."/>
            <person name="Tanaka T."/>
            <person name="Terpstra P."/>
            <person name="Tognoni A."/>
            <person name="Tosato V."/>
            <person name="Uchiyama S."/>
            <person name="Vandenbol M."/>
            <person name="Vannier F."/>
            <person name="Vassarotti A."/>
            <person name="Viari A."/>
            <person name="Wambutt R."/>
            <person name="Wedler E."/>
            <person name="Wedler H."/>
            <person name="Weitzenegger T."/>
            <person name="Winters P."/>
            <person name="Wipat A."/>
            <person name="Yamamoto H."/>
            <person name="Yamane K."/>
            <person name="Yasumoto K."/>
            <person name="Yata K."/>
            <person name="Yoshida K."/>
            <person name="Yoshikawa H.-F."/>
            <person name="Zumstein E."/>
            <person name="Yoshikawa H."/>
            <person name="Danchin A."/>
        </authorList>
    </citation>
    <scope>NUCLEOTIDE SEQUENCE [LARGE SCALE GENOMIC DNA]</scope>
    <source>
        <strain>168</strain>
    </source>
</reference>
<reference key="3">
    <citation type="journal article" date="1997" name="Electrophoresis">
        <title>First steps from a two-dimensional protein index towards a response-regulation map for Bacillus subtilis.</title>
        <authorList>
            <person name="Antelmann H."/>
            <person name="Bernhardt J."/>
            <person name="Schmid R."/>
            <person name="Mach H."/>
            <person name="Voelker U."/>
            <person name="Hecker M."/>
        </authorList>
    </citation>
    <scope>PROTEIN SEQUENCE OF 2-24</scope>
    <source>
        <strain>168 / IS58</strain>
    </source>
</reference>
<sequence length="163" mass="18831">MALTKEQTQHLYHKLLDMQKELSGEKKETESMTEEVGELSNGVDNHMADHGTLVTDRMTDQTVKEIDRELLEEVNRALQKMKDGTYGVCEKTGQEIPYERLEAVPYARMTVEAQADVEDDLETDAPSYEREFHEQVKDLSNKETIDQKSSQTYEILDREQDSK</sequence>
<feature type="initiator methionine" description="Removed" evidence="3">
    <location>
        <position position="1"/>
    </location>
</feature>
<feature type="chain" id="PRO_0000187553" description="General stress protein 16O">
    <location>
        <begin position="2"/>
        <end position="163"/>
    </location>
</feature>
<feature type="zinc finger region" description="dksA C4-type; degenerate" evidence="1">
    <location>
        <begin position="89"/>
        <end position="123"/>
    </location>
</feature>
<feature type="region of interest" description="Disordered" evidence="2">
    <location>
        <begin position="19"/>
        <end position="55"/>
    </location>
</feature>
<feature type="region of interest" description="Disordered" evidence="2">
    <location>
        <begin position="115"/>
        <end position="163"/>
    </location>
</feature>
<feature type="compositionally biased region" description="Basic and acidic residues" evidence="2">
    <location>
        <begin position="19"/>
        <end position="30"/>
    </location>
</feature>
<feature type="compositionally biased region" description="Basic and acidic residues" evidence="2">
    <location>
        <begin position="127"/>
        <end position="146"/>
    </location>
</feature>
<name>G16O_BACSU</name>
<proteinExistence type="evidence at protein level"/>
<organism>
    <name type="scientific">Bacillus subtilis (strain 168)</name>
    <dbReference type="NCBI Taxonomy" id="224308"/>
    <lineage>
        <taxon>Bacteria</taxon>
        <taxon>Bacillati</taxon>
        <taxon>Bacillota</taxon>
        <taxon>Bacilli</taxon>
        <taxon>Bacillales</taxon>
        <taxon>Bacillaceae</taxon>
        <taxon>Bacillus</taxon>
    </lineage>
</organism>